<comment type="function">
    <text evidence="1">Binds as a heterodimer with protein bS6 to the central domain of the 16S rRNA, where it helps stabilize the platform of the 30S subunit.</text>
</comment>
<comment type="subunit">
    <text evidence="1">Part of the 30S ribosomal subunit. Forms a tight heterodimer with protein bS6.</text>
</comment>
<comment type="similarity">
    <text evidence="1">Belongs to the bacterial ribosomal protein bS18 family.</text>
</comment>
<dbReference type="EMBL" id="CP001359">
    <property type="protein sequence ID" value="ACL63494.1"/>
    <property type="molecule type" value="Genomic_DNA"/>
</dbReference>
<dbReference type="RefSeq" id="WP_012631579.1">
    <property type="nucleotide sequence ID" value="NC_011891.1"/>
</dbReference>
<dbReference type="SMR" id="B8J802"/>
<dbReference type="KEGG" id="acp:A2cp1_0135"/>
<dbReference type="HOGENOM" id="CLU_148710_0_2_7"/>
<dbReference type="Proteomes" id="UP000007089">
    <property type="component" value="Chromosome"/>
</dbReference>
<dbReference type="GO" id="GO:0022627">
    <property type="term" value="C:cytosolic small ribosomal subunit"/>
    <property type="evidence" value="ECO:0007669"/>
    <property type="project" value="TreeGrafter"/>
</dbReference>
<dbReference type="GO" id="GO:0070181">
    <property type="term" value="F:small ribosomal subunit rRNA binding"/>
    <property type="evidence" value="ECO:0007669"/>
    <property type="project" value="TreeGrafter"/>
</dbReference>
<dbReference type="GO" id="GO:0003735">
    <property type="term" value="F:structural constituent of ribosome"/>
    <property type="evidence" value="ECO:0007669"/>
    <property type="project" value="InterPro"/>
</dbReference>
<dbReference type="GO" id="GO:0006412">
    <property type="term" value="P:translation"/>
    <property type="evidence" value="ECO:0007669"/>
    <property type="project" value="UniProtKB-UniRule"/>
</dbReference>
<dbReference type="Gene3D" id="4.10.640.10">
    <property type="entry name" value="Ribosomal protein S18"/>
    <property type="match status" value="1"/>
</dbReference>
<dbReference type="HAMAP" id="MF_00270">
    <property type="entry name" value="Ribosomal_bS18"/>
    <property type="match status" value="1"/>
</dbReference>
<dbReference type="InterPro" id="IPR001648">
    <property type="entry name" value="Ribosomal_bS18"/>
</dbReference>
<dbReference type="InterPro" id="IPR036870">
    <property type="entry name" value="Ribosomal_bS18_sf"/>
</dbReference>
<dbReference type="NCBIfam" id="TIGR00165">
    <property type="entry name" value="S18"/>
    <property type="match status" value="1"/>
</dbReference>
<dbReference type="PANTHER" id="PTHR13479">
    <property type="entry name" value="30S RIBOSOMAL PROTEIN S18"/>
    <property type="match status" value="1"/>
</dbReference>
<dbReference type="PANTHER" id="PTHR13479:SF40">
    <property type="entry name" value="SMALL RIBOSOMAL SUBUNIT PROTEIN BS18M"/>
    <property type="match status" value="1"/>
</dbReference>
<dbReference type="Pfam" id="PF01084">
    <property type="entry name" value="Ribosomal_S18"/>
    <property type="match status" value="1"/>
</dbReference>
<dbReference type="PRINTS" id="PR00974">
    <property type="entry name" value="RIBOSOMALS18"/>
</dbReference>
<dbReference type="SUPFAM" id="SSF46911">
    <property type="entry name" value="Ribosomal protein S18"/>
    <property type="match status" value="1"/>
</dbReference>
<sequence>MARPDMGGPKTGGFGGPRSGGFGGGGGGGFGGGGFGGGRGGDRGDRGDRDDRGGDEGGGRRGFGRRKVCRFCADKALKVDYKDQGQMKYFLTERGKIIPRRISGNCAKHQREVATAIKRGRMLAILPYTVGQM</sequence>
<gene>
    <name evidence="1" type="primary">rpsR</name>
    <name type="ordered locus">A2cp1_0135</name>
</gene>
<accession>B8J802</accession>
<keyword id="KW-0687">Ribonucleoprotein</keyword>
<keyword id="KW-0689">Ribosomal protein</keyword>
<keyword id="KW-0694">RNA-binding</keyword>
<keyword id="KW-0699">rRNA-binding</keyword>
<protein>
    <recommendedName>
        <fullName evidence="1">Small ribosomal subunit protein bS18</fullName>
    </recommendedName>
    <alternativeName>
        <fullName evidence="3">30S ribosomal protein S18</fullName>
    </alternativeName>
</protein>
<proteinExistence type="inferred from homology"/>
<feature type="chain" id="PRO_1000196512" description="Small ribosomal subunit protein bS18">
    <location>
        <begin position="1"/>
        <end position="133"/>
    </location>
</feature>
<feature type="region of interest" description="Disordered" evidence="2">
    <location>
        <begin position="1"/>
        <end position="63"/>
    </location>
</feature>
<feature type="compositionally biased region" description="Gly residues" evidence="2">
    <location>
        <begin position="9"/>
        <end position="39"/>
    </location>
</feature>
<feature type="compositionally biased region" description="Basic and acidic residues" evidence="2">
    <location>
        <begin position="40"/>
        <end position="59"/>
    </location>
</feature>
<evidence type="ECO:0000255" key="1">
    <source>
        <dbReference type="HAMAP-Rule" id="MF_00270"/>
    </source>
</evidence>
<evidence type="ECO:0000256" key="2">
    <source>
        <dbReference type="SAM" id="MobiDB-lite"/>
    </source>
</evidence>
<evidence type="ECO:0000305" key="3"/>
<organism>
    <name type="scientific">Anaeromyxobacter dehalogenans (strain 2CP-1 / ATCC BAA-258)</name>
    <dbReference type="NCBI Taxonomy" id="455488"/>
    <lineage>
        <taxon>Bacteria</taxon>
        <taxon>Pseudomonadati</taxon>
        <taxon>Myxococcota</taxon>
        <taxon>Myxococcia</taxon>
        <taxon>Myxococcales</taxon>
        <taxon>Cystobacterineae</taxon>
        <taxon>Anaeromyxobacteraceae</taxon>
        <taxon>Anaeromyxobacter</taxon>
    </lineage>
</organism>
<name>RS18_ANAD2</name>
<reference key="1">
    <citation type="submission" date="2009-01" db="EMBL/GenBank/DDBJ databases">
        <title>Complete sequence of Anaeromyxobacter dehalogenans 2CP-1.</title>
        <authorList>
            <person name="Lucas S."/>
            <person name="Copeland A."/>
            <person name="Lapidus A."/>
            <person name="Glavina del Rio T."/>
            <person name="Dalin E."/>
            <person name="Tice H."/>
            <person name="Bruce D."/>
            <person name="Goodwin L."/>
            <person name="Pitluck S."/>
            <person name="Saunders E."/>
            <person name="Brettin T."/>
            <person name="Detter J.C."/>
            <person name="Han C."/>
            <person name="Larimer F."/>
            <person name="Land M."/>
            <person name="Hauser L."/>
            <person name="Kyrpides N."/>
            <person name="Ovchinnikova G."/>
            <person name="Beliaev A.S."/>
            <person name="Richardson P."/>
        </authorList>
    </citation>
    <scope>NUCLEOTIDE SEQUENCE [LARGE SCALE GENOMIC DNA]</scope>
    <source>
        <strain>2CP-1 / ATCC BAA-258</strain>
    </source>
</reference>